<evidence type="ECO:0000255" key="1">
    <source>
        <dbReference type="HAMAP-Rule" id="MF_00056"/>
    </source>
</evidence>
<accession>B8CKA0</accession>
<reference key="1">
    <citation type="journal article" date="2008" name="PLoS ONE">
        <title>Environmental adaptation: genomic analysis of the piezotolerant and psychrotolerant deep-sea iron reducing bacterium Shewanella piezotolerans WP3.</title>
        <authorList>
            <person name="Wang F."/>
            <person name="Wang J."/>
            <person name="Jian H."/>
            <person name="Zhang B."/>
            <person name="Li S."/>
            <person name="Wang F."/>
            <person name="Zeng X."/>
            <person name="Gao L."/>
            <person name="Bartlett D.H."/>
            <person name="Yu J."/>
            <person name="Hu S."/>
            <person name="Xiao X."/>
        </authorList>
    </citation>
    <scope>NUCLEOTIDE SEQUENCE [LARGE SCALE GENOMIC DNA]</scope>
    <source>
        <strain>WP3 / JCM 13877</strain>
    </source>
</reference>
<organism>
    <name type="scientific">Shewanella piezotolerans (strain WP3 / JCM 13877)</name>
    <dbReference type="NCBI Taxonomy" id="225849"/>
    <lineage>
        <taxon>Bacteria</taxon>
        <taxon>Pseudomonadati</taxon>
        <taxon>Pseudomonadota</taxon>
        <taxon>Gammaproteobacteria</taxon>
        <taxon>Alteromonadales</taxon>
        <taxon>Shewanellaceae</taxon>
        <taxon>Shewanella</taxon>
    </lineage>
</organism>
<gene>
    <name evidence="1" type="primary">kdsA</name>
    <name type="ordered locus">swp_1142</name>
</gene>
<keyword id="KW-0963">Cytoplasm</keyword>
<keyword id="KW-0448">Lipopolysaccharide biosynthesis</keyword>
<keyword id="KW-0808">Transferase</keyword>
<sequence>MSNKTIDLGSIEIANDKPFVLFGGMNVLESRDLAMQIAETYAEVTQKLGIPYVFKASFDKANRSSVNSYRGPGMEEGLKIFEEIKSTFNLPLITDVHEVHQCAPVAEVVDIIQLPAFLARQTDLVVAMAKTGAIINVKKPQFLAPHEMRHIISKFNEAGNDEIILCERGSSFGYNNLVVDMLGMDEMKQSGYPVIFDATHALQKPGGRSDSAGGRRAQATELARSGMALGLAGLFIEAHPDPDNAKCDGPCALPLHQLENYLTQMKAVDDLVKSFAPIDTSK</sequence>
<comment type="catalytic activity">
    <reaction evidence="1">
        <text>D-arabinose 5-phosphate + phosphoenolpyruvate + H2O = 3-deoxy-alpha-D-manno-2-octulosonate-8-phosphate + phosphate</text>
        <dbReference type="Rhea" id="RHEA:14053"/>
        <dbReference type="ChEBI" id="CHEBI:15377"/>
        <dbReference type="ChEBI" id="CHEBI:43474"/>
        <dbReference type="ChEBI" id="CHEBI:57693"/>
        <dbReference type="ChEBI" id="CHEBI:58702"/>
        <dbReference type="ChEBI" id="CHEBI:85985"/>
        <dbReference type="EC" id="2.5.1.55"/>
    </reaction>
</comment>
<comment type="pathway">
    <text evidence="1">Carbohydrate biosynthesis; 3-deoxy-D-manno-octulosonate biosynthesis; 3-deoxy-D-manno-octulosonate from D-ribulose 5-phosphate: step 2/3.</text>
</comment>
<comment type="pathway">
    <text evidence="1">Bacterial outer membrane biogenesis; lipopolysaccharide biosynthesis.</text>
</comment>
<comment type="subcellular location">
    <subcellularLocation>
        <location evidence="1">Cytoplasm</location>
    </subcellularLocation>
</comment>
<comment type="similarity">
    <text evidence="1">Belongs to the KdsA family.</text>
</comment>
<feature type="chain" id="PRO_1000116882" description="2-dehydro-3-deoxyphosphooctonate aldolase">
    <location>
        <begin position="1"/>
        <end position="282"/>
    </location>
</feature>
<proteinExistence type="inferred from homology"/>
<dbReference type="EC" id="2.5.1.55" evidence="1"/>
<dbReference type="EMBL" id="CP000472">
    <property type="protein sequence ID" value="ACJ27939.1"/>
    <property type="molecule type" value="Genomic_DNA"/>
</dbReference>
<dbReference type="RefSeq" id="WP_020911317.1">
    <property type="nucleotide sequence ID" value="NC_011566.1"/>
</dbReference>
<dbReference type="SMR" id="B8CKA0"/>
<dbReference type="STRING" id="225849.swp_1142"/>
<dbReference type="KEGG" id="swp:swp_1142"/>
<dbReference type="eggNOG" id="COG2877">
    <property type="taxonomic scope" value="Bacteria"/>
</dbReference>
<dbReference type="HOGENOM" id="CLU_036666_0_0_6"/>
<dbReference type="OrthoDB" id="9776934at2"/>
<dbReference type="UniPathway" id="UPA00030"/>
<dbReference type="UniPathway" id="UPA00357">
    <property type="reaction ID" value="UER00474"/>
</dbReference>
<dbReference type="Proteomes" id="UP000000753">
    <property type="component" value="Chromosome"/>
</dbReference>
<dbReference type="GO" id="GO:0005737">
    <property type="term" value="C:cytoplasm"/>
    <property type="evidence" value="ECO:0007669"/>
    <property type="project" value="UniProtKB-SubCell"/>
</dbReference>
<dbReference type="GO" id="GO:0008676">
    <property type="term" value="F:3-deoxy-8-phosphooctulonate synthase activity"/>
    <property type="evidence" value="ECO:0007669"/>
    <property type="project" value="UniProtKB-UniRule"/>
</dbReference>
<dbReference type="GO" id="GO:0019294">
    <property type="term" value="P:keto-3-deoxy-D-manno-octulosonic acid biosynthetic process"/>
    <property type="evidence" value="ECO:0007669"/>
    <property type="project" value="UniProtKB-UniRule"/>
</dbReference>
<dbReference type="Gene3D" id="3.20.20.70">
    <property type="entry name" value="Aldolase class I"/>
    <property type="match status" value="1"/>
</dbReference>
<dbReference type="HAMAP" id="MF_00056">
    <property type="entry name" value="KDO8P_synth"/>
    <property type="match status" value="1"/>
</dbReference>
<dbReference type="InterPro" id="IPR013785">
    <property type="entry name" value="Aldolase_TIM"/>
</dbReference>
<dbReference type="InterPro" id="IPR006218">
    <property type="entry name" value="DAHP1/KDSA"/>
</dbReference>
<dbReference type="InterPro" id="IPR006269">
    <property type="entry name" value="KDO8P_synthase"/>
</dbReference>
<dbReference type="NCBIfam" id="TIGR01362">
    <property type="entry name" value="KDO8P_synth"/>
    <property type="match status" value="1"/>
</dbReference>
<dbReference type="NCBIfam" id="NF003543">
    <property type="entry name" value="PRK05198.1"/>
    <property type="match status" value="1"/>
</dbReference>
<dbReference type="NCBIfam" id="NF009109">
    <property type="entry name" value="PRK12457.1"/>
    <property type="match status" value="1"/>
</dbReference>
<dbReference type="PANTHER" id="PTHR21057">
    <property type="entry name" value="PHOSPHO-2-DEHYDRO-3-DEOXYHEPTONATE ALDOLASE"/>
    <property type="match status" value="1"/>
</dbReference>
<dbReference type="Pfam" id="PF00793">
    <property type="entry name" value="DAHP_synth_1"/>
    <property type="match status" value="1"/>
</dbReference>
<dbReference type="SUPFAM" id="SSF51569">
    <property type="entry name" value="Aldolase"/>
    <property type="match status" value="1"/>
</dbReference>
<protein>
    <recommendedName>
        <fullName evidence="1">2-dehydro-3-deoxyphosphooctonate aldolase</fullName>
        <ecNumber evidence="1">2.5.1.55</ecNumber>
    </recommendedName>
    <alternativeName>
        <fullName evidence="1">3-deoxy-D-manno-octulosonic acid 8-phosphate synthase</fullName>
    </alternativeName>
    <alternativeName>
        <fullName evidence="1">KDO-8-phosphate synthase</fullName>
        <shortName evidence="1">KDO 8-P synthase</shortName>
        <shortName evidence="1">KDOPS</shortName>
    </alternativeName>
    <alternativeName>
        <fullName evidence="1">Phospho-2-dehydro-3-deoxyoctonate aldolase</fullName>
    </alternativeName>
</protein>
<name>KDSA_SHEPW</name>